<feature type="chain" id="PRO_1000058935" description="Adenylate kinase">
    <location>
        <begin position="1"/>
        <end position="214"/>
    </location>
</feature>
<feature type="region of interest" description="NMP" evidence="1">
    <location>
        <begin position="30"/>
        <end position="59"/>
    </location>
</feature>
<feature type="region of interest" description="LID" evidence="1">
    <location>
        <begin position="122"/>
        <end position="159"/>
    </location>
</feature>
<feature type="binding site" evidence="1">
    <location>
        <begin position="10"/>
        <end position="15"/>
    </location>
    <ligand>
        <name>ATP</name>
        <dbReference type="ChEBI" id="CHEBI:30616"/>
    </ligand>
</feature>
<feature type="binding site" evidence="1">
    <location>
        <position position="31"/>
    </location>
    <ligand>
        <name>AMP</name>
        <dbReference type="ChEBI" id="CHEBI:456215"/>
    </ligand>
</feature>
<feature type="binding site" evidence="1">
    <location>
        <position position="36"/>
    </location>
    <ligand>
        <name>AMP</name>
        <dbReference type="ChEBI" id="CHEBI:456215"/>
    </ligand>
</feature>
<feature type="binding site" evidence="1">
    <location>
        <begin position="57"/>
        <end position="59"/>
    </location>
    <ligand>
        <name>AMP</name>
        <dbReference type="ChEBI" id="CHEBI:456215"/>
    </ligand>
</feature>
<feature type="binding site" evidence="1">
    <location>
        <begin position="85"/>
        <end position="88"/>
    </location>
    <ligand>
        <name>AMP</name>
        <dbReference type="ChEBI" id="CHEBI:456215"/>
    </ligand>
</feature>
<feature type="binding site" evidence="1">
    <location>
        <position position="92"/>
    </location>
    <ligand>
        <name>AMP</name>
        <dbReference type="ChEBI" id="CHEBI:456215"/>
    </ligand>
</feature>
<feature type="binding site" evidence="1">
    <location>
        <position position="123"/>
    </location>
    <ligand>
        <name>ATP</name>
        <dbReference type="ChEBI" id="CHEBI:30616"/>
    </ligand>
</feature>
<feature type="binding site" evidence="1">
    <location>
        <begin position="132"/>
        <end position="133"/>
    </location>
    <ligand>
        <name>ATP</name>
        <dbReference type="ChEBI" id="CHEBI:30616"/>
    </ligand>
</feature>
<feature type="binding site" evidence="1">
    <location>
        <position position="156"/>
    </location>
    <ligand>
        <name>AMP</name>
        <dbReference type="ChEBI" id="CHEBI:456215"/>
    </ligand>
</feature>
<feature type="binding site" evidence="1">
    <location>
        <position position="167"/>
    </location>
    <ligand>
        <name>AMP</name>
        <dbReference type="ChEBI" id="CHEBI:456215"/>
    </ligand>
</feature>
<feature type="binding site" evidence="1">
    <location>
        <position position="200"/>
    </location>
    <ligand>
        <name>ATP</name>
        <dbReference type="ChEBI" id="CHEBI:30616"/>
    </ligand>
</feature>
<accession>A7MT47</accession>
<keyword id="KW-0067">ATP-binding</keyword>
<keyword id="KW-0963">Cytoplasm</keyword>
<keyword id="KW-0418">Kinase</keyword>
<keyword id="KW-0545">Nucleotide biosynthesis</keyword>
<keyword id="KW-0547">Nucleotide-binding</keyword>
<keyword id="KW-0808">Transferase</keyword>
<organism>
    <name type="scientific">Vibrio campbellii (strain ATCC BAA-1116)</name>
    <dbReference type="NCBI Taxonomy" id="2902295"/>
    <lineage>
        <taxon>Bacteria</taxon>
        <taxon>Pseudomonadati</taxon>
        <taxon>Pseudomonadota</taxon>
        <taxon>Gammaproteobacteria</taxon>
        <taxon>Vibrionales</taxon>
        <taxon>Vibrionaceae</taxon>
        <taxon>Vibrio</taxon>
    </lineage>
</organism>
<proteinExistence type="inferred from homology"/>
<sequence length="214" mass="23324">MRIILLGAPGAGKGTQANFIMDKYGIPQISTGDMLRAAIKAGTELGKQAKAVIDAGQLVSDEIILGLIKERIAQDDCEKGFLLDGFPRTIPQADGLKEMGVDVDYVIEFDVADDVIVERMAGRRAHLPSGRTYHVVYNPPKVEGKDDVTGEDLVVRDDDKEETVRARLGVYHEQTAPLINYYGKEAEAGNTKYLKFDGTKQVAEVSADIEKALA</sequence>
<name>KAD_VIBC1</name>
<reference key="1">
    <citation type="submission" date="2007-08" db="EMBL/GenBank/DDBJ databases">
        <authorList>
            <consortium name="The Vibrio harveyi Genome Sequencing Project"/>
            <person name="Bassler B."/>
            <person name="Clifton S.W."/>
            <person name="Fulton L."/>
            <person name="Delehaunty K."/>
            <person name="Fronick C."/>
            <person name="Harrison M."/>
            <person name="Markivic C."/>
            <person name="Fulton R."/>
            <person name="Tin-Wollam A.-M."/>
            <person name="Shah N."/>
            <person name="Pepin K."/>
            <person name="Nash W."/>
            <person name="Thiruvilangam P."/>
            <person name="Bhonagiri V."/>
            <person name="Waters C."/>
            <person name="Tu K.C."/>
            <person name="Irgon J."/>
            <person name="Wilson R.K."/>
        </authorList>
    </citation>
    <scope>NUCLEOTIDE SEQUENCE [LARGE SCALE GENOMIC DNA]</scope>
    <source>
        <strain>ATCC BAA-1116 / BB120</strain>
    </source>
</reference>
<gene>
    <name evidence="1" type="primary">adk</name>
    <name type="ordered locus">VIBHAR_01328</name>
</gene>
<protein>
    <recommendedName>
        <fullName evidence="1">Adenylate kinase</fullName>
        <shortName evidence="1">AK</shortName>
        <ecNumber evidence="1">2.7.4.3</ecNumber>
    </recommendedName>
    <alternativeName>
        <fullName evidence="1">ATP-AMP transphosphorylase</fullName>
    </alternativeName>
    <alternativeName>
        <fullName evidence="1">ATP:AMP phosphotransferase</fullName>
    </alternativeName>
    <alternativeName>
        <fullName evidence="1">Adenylate monophosphate kinase</fullName>
    </alternativeName>
</protein>
<comment type="function">
    <text evidence="1">Catalyzes the reversible transfer of the terminal phosphate group between ATP and AMP. Plays an important role in cellular energy homeostasis and in adenine nucleotide metabolism.</text>
</comment>
<comment type="catalytic activity">
    <reaction evidence="1">
        <text>AMP + ATP = 2 ADP</text>
        <dbReference type="Rhea" id="RHEA:12973"/>
        <dbReference type="ChEBI" id="CHEBI:30616"/>
        <dbReference type="ChEBI" id="CHEBI:456215"/>
        <dbReference type="ChEBI" id="CHEBI:456216"/>
        <dbReference type="EC" id="2.7.4.3"/>
    </reaction>
</comment>
<comment type="pathway">
    <text evidence="1">Purine metabolism; AMP biosynthesis via salvage pathway; AMP from ADP: step 1/1.</text>
</comment>
<comment type="subunit">
    <text evidence="1">Monomer.</text>
</comment>
<comment type="subcellular location">
    <subcellularLocation>
        <location evidence="1">Cytoplasm</location>
    </subcellularLocation>
</comment>
<comment type="domain">
    <text evidence="1">Consists of three domains, a large central CORE domain and two small peripheral domains, NMPbind and LID, which undergo movements during catalysis. The LID domain closes over the site of phosphoryl transfer upon ATP binding. Assembling and dissambling the active center during each catalytic cycle provides an effective means to prevent ATP hydrolysis.</text>
</comment>
<comment type="similarity">
    <text evidence="1">Belongs to the adenylate kinase family.</text>
</comment>
<dbReference type="EC" id="2.7.4.3" evidence="1"/>
<dbReference type="EMBL" id="CP000789">
    <property type="protein sequence ID" value="ABU70305.1"/>
    <property type="molecule type" value="Genomic_DNA"/>
</dbReference>
<dbReference type="RefSeq" id="WP_005425498.1">
    <property type="nucleotide sequence ID" value="NC_022269.1"/>
</dbReference>
<dbReference type="SMR" id="A7MT47"/>
<dbReference type="GeneID" id="83582573"/>
<dbReference type="KEGG" id="vha:VIBHAR_01328"/>
<dbReference type="PATRIC" id="fig|338187.25.peg.1320"/>
<dbReference type="UniPathway" id="UPA00588">
    <property type="reaction ID" value="UER00649"/>
</dbReference>
<dbReference type="Proteomes" id="UP000008152">
    <property type="component" value="Chromosome I"/>
</dbReference>
<dbReference type="GO" id="GO:0005737">
    <property type="term" value="C:cytoplasm"/>
    <property type="evidence" value="ECO:0007669"/>
    <property type="project" value="UniProtKB-SubCell"/>
</dbReference>
<dbReference type="GO" id="GO:0004017">
    <property type="term" value="F:adenylate kinase activity"/>
    <property type="evidence" value="ECO:0007669"/>
    <property type="project" value="UniProtKB-UniRule"/>
</dbReference>
<dbReference type="GO" id="GO:0005524">
    <property type="term" value="F:ATP binding"/>
    <property type="evidence" value="ECO:0007669"/>
    <property type="project" value="UniProtKB-UniRule"/>
</dbReference>
<dbReference type="GO" id="GO:0044209">
    <property type="term" value="P:AMP salvage"/>
    <property type="evidence" value="ECO:0007669"/>
    <property type="project" value="UniProtKB-UniRule"/>
</dbReference>
<dbReference type="CDD" id="cd01428">
    <property type="entry name" value="ADK"/>
    <property type="match status" value="1"/>
</dbReference>
<dbReference type="FunFam" id="3.40.50.300:FF:000106">
    <property type="entry name" value="Adenylate kinase mitochondrial"/>
    <property type="match status" value="1"/>
</dbReference>
<dbReference type="Gene3D" id="3.40.50.300">
    <property type="entry name" value="P-loop containing nucleotide triphosphate hydrolases"/>
    <property type="match status" value="1"/>
</dbReference>
<dbReference type="HAMAP" id="MF_00235">
    <property type="entry name" value="Adenylate_kinase_Adk"/>
    <property type="match status" value="1"/>
</dbReference>
<dbReference type="InterPro" id="IPR006259">
    <property type="entry name" value="Adenyl_kin_sub"/>
</dbReference>
<dbReference type="InterPro" id="IPR000850">
    <property type="entry name" value="Adenylat/UMP-CMP_kin"/>
</dbReference>
<dbReference type="InterPro" id="IPR033690">
    <property type="entry name" value="Adenylat_kinase_CS"/>
</dbReference>
<dbReference type="InterPro" id="IPR007862">
    <property type="entry name" value="Adenylate_kinase_lid-dom"/>
</dbReference>
<dbReference type="InterPro" id="IPR027417">
    <property type="entry name" value="P-loop_NTPase"/>
</dbReference>
<dbReference type="NCBIfam" id="TIGR01351">
    <property type="entry name" value="adk"/>
    <property type="match status" value="1"/>
</dbReference>
<dbReference type="NCBIfam" id="NF001379">
    <property type="entry name" value="PRK00279.1-1"/>
    <property type="match status" value="1"/>
</dbReference>
<dbReference type="NCBIfam" id="NF001380">
    <property type="entry name" value="PRK00279.1-2"/>
    <property type="match status" value="1"/>
</dbReference>
<dbReference type="NCBIfam" id="NF001381">
    <property type="entry name" value="PRK00279.1-3"/>
    <property type="match status" value="1"/>
</dbReference>
<dbReference type="PANTHER" id="PTHR23359">
    <property type="entry name" value="NUCLEOTIDE KINASE"/>
    <property type="match status" value="1"/>
</dbReference>
<dbReference type="Pfam" id="PF00406">
    <property type="entry name" value="ADK"/>
    <property type="match status" value="1"/>
</dbReference>
<dbReference type="Pfam" id="PF05191">
    <property type="entry name" value="ADK_lid"/>
    <property type="match status" value="1"/>
</dbReference>
<dbReference type="PRINTS" id="PR00094">
    <property type="entry name" value="ADENYLTKNASE"/>
</dbReference>
<dbReference type="SUPFAM" id="SSF52540">
    <property type="entry name" value="P-loop containing nucleoside triphosphate hydrolases"/>
    <property type="match status" value="1"/>
</dbReference>
<dbReference type="PROSITE" id="PS00113">
    <property type="entry name" value="ADENYLATE_KINASE"/>
    <property type="match status" value="1"/>
</dbReference>
<evidence type="ECO:0000255" key="1">
    <source>
        <dbReference type="HAMAP-Rule" id="MF_00235"/>
    </source>
</evidence>